<reference key="1">
    <citation type="submission" date="2008-12" db="EMBL/GenBank/DDBJ databases">
        <title>Complete sequence of Chloroflexus aggregans DSM 9485.</title>
        <authorList>
            <consortium name="US DOE Joint Genome Institute"/>
            <person name="Lucas S."/>
            <person name="Copeland A."/>
            <person name="Lapidus A."/>
            <person name="Glavina del Rio T."/>
            <person name="Dalin E."/>
            <person name="Tice H."/>
            <person name="Pitluck S."/>
            <person name="Foster B."/>
            <person name="Larimer F."/>
            <person name="Land M."/>
            <person name="Hauser L."/>
            <person name="Kyrpides N."/>
            <person name="Mikhailova N."/>
            <person name="Bryant D.A."/>
            <person name="Richardson P."/>
        </authorList>
    </citation>
    <scope>NUCLEOTIDE SEQUENCE [LARGE SCALE GENOMIC DNA]</scope>
    <source>
        <strain>MD-66 / DSM 9485</strain>
    </source>
</reference>
<sequence length="119" mass="13880">MARVKRGTMVRKRHKKLLKQAKGYRGARSRHYKVAHEAVMHALADAYRDRRRRKRDFRRLWIMRINAAARLNGTTYSRLVNALKQANIQIDRKMLADLAVRDPQAFSRIVQQAQAAVTA</sequence>
<accession>B8G7I4</accession>
<evidence type="ECO:0000255" key="1">
    <source>
        <dbReference type="HAMAP-Rule" id="MF_00382"/>
    </source>
</evidence>
<evidence type="ECO:0000305" key="2"/>
<organism>
    <name type="scientific">Chloroflexus aggregans (strain MD-66 / DSM 9485)</name>
    <dbReference type="NCBI Taxonomy" id="326427"/>
    <lineage>
        <taxon>Bacteria</taxon>
        <taxon>Bacillati</taxon>
        <taxon>Chloroflexota</taxon>
        <taxon>Chloroflexia</taxon>
        <taxon>Chloroflexales</taxon>
        <taxon>Chloroflexineae</taxon>
        <taxon>Chloroflexaceae</taxon>
        <taxon>Chloroflexus</taxon>
    </lineage>
</organism>
<keyword id="KW-0687">Ribonucleoprotein</keyword>
<keyword id="KW-0689">Ribosomal protein</keyword>
<keyword id="KW-0694">RNA-binding</keyword>
<keyword id="KW-0699">rRNA-binding</keyword>
<proteinExistence type="inferred from homology"/>
<dbReference type="EMBL" id="CP001337">
    <property type="protein sequence ID" value="ACL26019.1"/>
    <property type="molecule type" value="Genomic_DNA"/>
</dbReference>
<dbReference type="RefSeq" id="WP_015941867.1">
    <property type="nucleotide sequence ID" value="NC_011831.1"/>
</dbReference>
<dbReference type="SMR" id="B8G7I4"/>
<dbReference type="STRING" id="326427.Cagg_3161"/>
<dbReference type="KEGG" id="cag:Cagg_3161"/>
<dbReference type="eggNOG" id="COG0292">
    <property type="taxonomic scope" value="Bacteria"/>
</dbReference>
<dbReference type="HOGENOM" id="CLU_123265_0_1_0"/>
<dbReference type="OrthoDB" id="9808966at2"/>
<dbReference type="Proteomes" id="UP000002508">
    <property type="component" value="Chromosome"/>
</dbReference>
<dbReference type="GO" id="GO:1990904">
    <property type="term" value="C:ribonucleoprotein complex"/>
    <property type="evidence" value="ECO:0007669"/>
    <property type="project" value="UniProtKB-KW"/>
</dbReference>
<dbReference type="GO" id="GO:0005840">
    <property type="term" value="C:ribosome"/>
    <property type="evidence" value="ECO:0007669"/>
    <property type="project" value="UniProtKB-KW"/>
</dbReference>
<dbReference type="GO" id="GO:0019843">
    <property type="term" value="F:rRNA binding"/>
    <property type="evidence" value="ECO:0007669"/>
    <property type="project" value="UniProtKB-UniRule"/>
</dbReference>
<dbReference type="GO" id="GO:0003735">
    <property type="term" value="F:structural constituent of ribosome"/>
    <property type="evidence" value="ECO:0007669"/>
    <property type="project" value="InterPro"/>
</dbReference>
<dbReference type="GO" id="GO:0000027">
    <property type="term" value="P:ribosomal large subunit assembly"/>
    <property type="evidence" value="ECO:0007669"/>
    <property type="project" value="UniProtKB-UniRule"/>
</dbReference>
<dbReference type="GO" id="GO:0006412">
    <property type="term" value="P:translation"/>
    <property type="evidence" value="ECO:0007669"/>
    <property type="project" value="InterPro"/>
</dbReference>
<dbReference type="CDD" id="cd07026">
    <property type="entry name" value="Ribosomal_L20"/>
    <property type="match status" value="1"/>
</dbReference>
<dbReference type="FunFam" id="1.10.1900.20:FF:000001">
    <property type="entry name" value="50S ribosomal protein L20"/>
    <property type="match status" value="1"/>
</dbReference>
<dbReference type="Gene3D" id="6.10.160.10">
    <property type="match status" value="1"/>
</dbReference>
<dbReference type="Gene3D" id="1.10.1900.20">
    <property type="entry name" value="Ribosomal protein L20"/>
    <property type="match status" value="1"/>
</dbReference>
<dbReference type="HAMAP" id="MF_00382">
    <property type="entry name" value="Ribosomal_bL20"/>
    <property type="match status" value="1"/>
</dbReference>
<dbReference type="InterPro" id="IPR005813">
    <property type="entry name" value="Ribosomal_bL20"/>
</dbReference>
<dbReference type="InterPro" id="IPR049946">
    <property type="entry name" value="RIBOSOMAL_L20_CS"/>
</dbReference>
<dbReference type="InterPro" id="IPR035566">
    <property type="entry name" value="Ribosomal_protein_bL20_C"/>
</dbReference>
<dbReference type="NCBIfam" id="TIGR01032">
    <property type="entry name" value="rplT_bact"/>
    <property type="match status" value="1"/>
</dbReference>
<dbReference type="PANTHER" id="PTHR10986">
    <property type="entry name" value="39S RIBOSOMAL PROTEIN L20"/>
    <property type="match status" value="1"/>
</dbReference>
<dbReference type="Pfam" id="PF00453">
    <property type="entry name" value="Ribosomal_L20"/>
    <property type="match status" value="1"/>
</dbReference>
<dbReference type="PRINTS" id="PR00062">
    <property type="entry name" value="RIBOSOMALL20"/>
</dbReference>
<dbReference type="SUPFAM" id="SSF74731">
    <property type="entry name" value="Ribosomal protein L20"/>
    <property type="match status" value="1"/>
</dbReference>
<dbReference type="PROSITE" id="PS00937">
    <property type="entry name" value="RIBOSOMAL_L20"/>
    <property type="match status" value="1"/>
</dbReference>
<protein>
    <recommendedName>
        <fullName evidence="1">Large ribosomal subunit protein bL20</fullName>
    </recommendedName>
    <alternativeName>
        <fullName evidence="2">50S ribosomal protein L20</fullName>
    </alternativeName>
</protein>
<name>RL20_CHLAD</name>
<gene>
    <name evidence="1" type="primary">rplT</name>
    <name type="ordered locus">Cagg_3161</name>
</gene>
<feature type="chain" id="PRO_1000193947" description="Large ribosomal subunit protein bL20">
    <location>
        <begin position="1"/>
        <end position="119"/>
    </location>
</feature>
<comment type="function">
    <text evidence="1">Binds directly to 23S ribosomal RNA and is necessary for the in vitro assembly process of the 50S ribosomal subunit. It is not involved in the protein synthesizing functions of that subunit.</text>
</comment>
<comment type="similarity">
    <text evidence="1">Belongs to the bacterial ribosomal protein bL20 family.</text>
</comment>